<gene>
    <name type="primary">tra1</name>
    <name type="ORF">DDB_G0281947</name>
</gene>
<evidence type="ECO:0000255" key="1"/>
<evidence type="ECO:0000255" key="2">
    <source>
        <dbReference type="PROSITE-ProRule" id="PRU00269"/>
    </source>
</evidence>
<evidence type="ECO:0000255" key="3">
    <source>
        <dbReference type="PROSITE-ProRule" id="PRU00534"/>
    </source>
</evidence>
<evidence type="ECO:0000255" key="4">
    <source>
        <dbReference type="PROSITE-ProRule" id="PRU00535"/>
    </source>
</evidence>
<evidence type="ECO:0000256" key="5">
    <source>
        <dbReference type="SAM" id="MobiDB-lite"/>
    </source>
</evidence>
<evidence type="ECO:0000305" key="6"/>
<proteinExistence type="inferred from homology"/>
<feature type="chain" id="PRO_0000376004" description="Probable transcription-associated protein 1">
    <location>
        <begin position="1"/>
        <end position="4582"/>
    </location>
</feature>
<feature type="domain" description="FAT" evidence="3">
    <location>
        <begin position="3185"/>
        <end position="3815"/>
    </location>
</feature>
<feature type="domain" description="PI3K/PI4K catalytic" evidence="2">
    <location>
        <begin position="4171"/>
        <end position="4541"/>
    </location>
</feature>
<feature type="domain" description="FATC" evidence="3 4">
    <location>
        <begin position="4538"/>
        <end position="4582"/>
    </location>
</feature>
<feature type="region of interest" description="Disordered" evidence="5">
    <location>
        <begin position="1"/>
        <end position="52"/>
    </location>
</feature>
<feature type="region of interest" description="Disordered" evidence="5">
    <location>
        <begin position="219"/>
        <end position="276"/>
    </location>
</feature>
<feature type="region of interest" description="Disordered" evidence="5">
    <location>
        <begin position="556"/>
        <end position="581"/>
    </location>
</feature>
<feature type="region of interest" description="Disordered" evidence="5">
    <location>
        <begin position="794"/>
        <end position="821"/>
    </location>
</feature>
<feature type="region of interest" description="Disordered" evidence="5">
    <location>
        <begin position="1152"/>
        <end position="1195"/>
    </location>
</feature>
<feature type="region of interest" description="Disordered" evidence="5">
    <location>
        <begin position="1483"/>
        <end position="1570"/>
    </location>
</feature>
<feature type="region of interest" description="Disordered" evidence="5">
    <location>
        <begin position="2341"/>
        <end position="2410"/>
    </location>
</feature>
<feature type="region of interest" description="Disordered" evidence="5">
    <location>
        <begin position="2537"/>
        <end position="2567"/>
    </location>
</feature>
<feature type="region of interest" description="Disordered" evidence="5">
    <location>
        <begin position="2637"/>
        <end position="2662"/>
    </location>
</feature>
<feature type="region of interest" description="Disordered" evidence="5">
    <location>
        <begin position="2741"/>
        <end position="2789"/>
    </location>
</feature>
<feature type="region of interest" description="Disordered" evidence="5">
    <location>
        <begin position="3491"/>
        <end position="3517"/>
    </location>
</feature>
<feature type="region of interest" description="Disordered" evidence="5">
    <location>
        <begin position="3821"/>
        <end position="3928"/>
    </location>
</feature>
<feature type="region of interest" description="G-loop" evidence="2">
    <location>
        <begin position="4177"/>
        <end position="4183"/>
    </location>
</feature>
<feature type="region of interest" description="Disordered" evidence="5">
    <location>
        <begin position="4312"/>
        <end position="4337"/>
    </location>
</feature>
<feature type="region of interest" description="Catalytic loop" evidence="2">
    <location>
        <begin position="4400"/>
        <end position="4408"/>
    </location>
</feature>
<feature type="region of interest" description="Activation loop" evidence="2">
    <location>
        <begin position="4429"/>
        <end position="4451"/>
    </location>
</feature>
<feature type="coiled-coil region" evidence="1">
    <location>
        <begin position="2944"/>
        <end position="2991"/>
    </location>
</feature>
<feature type="compositionally biased region" description="Pro residues" evidence="5">
    <location>
        <begin position="1"/>
        <end position="11"/>
    </location>
</feature>
<feature type="compositionally biased region" description="Polar residues" evidence="5">
    <location>
        <begin position="25"/>
        <end position="37"/>
    </location>
</feature>
<feature type="compositionally biased region" description="Low complexity" evidence="5">
    <location>
        <begin position="38"/>
        <end position="50"/>
    </location>
</feature>
<feature type="compositionally biased region" description="Low complexity" evidence="5">
    <location>
        <begin position="219"/>
        <end position="250"/>
    </location>
</feature>
<feature type="compositionally biased region" description="Low complexity" evidence="5">
    <location>
        <begin position="258"/>
        <end position="276"/>
    </location>
</feature>
<feature type="compositionally biased region" description="Basic and acidic residues" evidence="5">
    <location>
        <begin position="556"/>
        <end position="573"/>
    </location>
</feature>
<feature type="compositionally biased region" description="Gly residues" evidence="5">
    <location>
        <begin position="794"/>
        <end position="811"/>
    </location>
</feature>
<feature type="compositionally biased region" description="Low complexity" evidence="5">
    <location>
        <begin position="812"/>
        <end position="821"/>
    </location>
</feature>
<feature type="compositionally biased region" description="Low complexity" evidence="5">
    <location>
        <begin position="1158"/>
        <end position="1194"/>
    </location>
</feature>
<feature type="compositionally biased region" description="Low complexity" evidence="5">
    <location>
        <begin position="1484"/>
        <end position="1504"/>
    </location>
</feature>
<feature type="compositionally biased region" description="Low complexity" evidence="5">
    <location>
        <begin position="1515"/>
        <end position="1568"/>
    </location>
</feature>
<feature type="compositionally biased region" description="Low complexity" evidence="5">
    <location>
        <begin position="2341"/>
        <end position="2367"/>
    </location>
</feature>
<feature type="compositionally biased region" description="Polar residues" evidence="5">
    <location>
        <begin position="2378"/>
        <end position="2398"/>
    </location>
</feature>
<feature type="compositionally biased region" description="Low complexity" evidence="5">
    <location>
        <begin position="2537"/>
        <end position="2556"/>
    </location>
</feature>
<feature type="compositionally biased region" description="Low complexity" evidence="5">
    <location>
        <begin position="2650"/>
        <end position="2662"/>
    </location>
</feature>
<feature type="compositionally biased region" description="Low complexity" evidence="5">
    <location>
        <begin position="3491"/>
        <end position="3509"/>
    </location>
</feature>
<feature type="compositionally biased region" description="Low complexity" evidence="5">
    <location>
        <begin position="3824"/>
        <end position="3916"/>
    </location>
</feature>
<feature type="compositionally biased region" description="Low complexity" evidence="5">
    <location>
        <begin position="4320"/>
        <end position="4337"/>
    </location>
</feature>
<name>TRA1_DICDI</name>
<dbReference type="EMBL" id="AAFI02000043">
    <property type="protein sequence ID" value="EAL66533.2"/>
    <property type="molecule type" value="Genomic_DNA"/>
</dbReference>
<dbReference type="RefSeq" id="XP_640504.5">
    <property type="nucleotide sequence ID" value="XM_635412.3"/>
</dbReference>
<dbReference type="FunCoup" id="Q54T85">
    <property type="interactions" value="713"/>
</dbReference>
<dbReference type="STRING" id="44689.Q54T85"/>
<dbReference type="GlyGen" id="Q54T85">
    <property type="glycosylation" value="4 sites"/>
</dbReference>
<dbReference type="PaxDb" id="44689-DDB0229338"/>
<dbReference type="GeneID" id="8623319"/>
<dbReference type="KEGG" id="ddi:DDB_G0281947"/>
<dbReference type="dictyBase" id="DDB_G0281947">
    <property type="gene designation" value="tra1"/>
</dbReference>
<dbReference type="VEuPathDB" id="AmoebaDB:DDB_G0281947"/>
<dbReference type="eggNOG" id="KOG0889">
    <property type="taxonomic scope" value="Eukaryota"/>
</dbReference>
<dbReference type="HOGENOM" id="CLU_000129_1_0_1"/>
<dbReference type="InParanoid" id="Q54T85"/>
<dbReference type="OMA" id="NEWNQMQ"/>
<dbReference type="PhylomeDB" id="Q54T85"/>
<dbReference type="Reactome" id="R-DDI-5689880">
    <property type="pathway name" value="Ub-specific processing proteases"/>
</dbReference>
<dbReference type="PRO" id="PR:Q54T85"/>
<dbReference type="Proteomes" id="UP000002195">
    <property type="component" value="Chromosome 3"/>
</dbReference>
<dbReference type="GO" id="GO:0035267">
    <property type="term" value="C:NuA4 histone acetyltransferase complex"/>
    <property type="evidence" value="ECO:0000250"/>
    <property type="project" value="dictyBase"/>
</dbReference>
<dbReference type="GO" id="GO:0005634">
    <property type="term" value="C:nucleus"/>
    <property type="evidence" value="ECO:0000250"/>
    <property type="project" value="dictyBase"/>
</dbReference>
<dbReference type="GO" id="GO:0000124">
    <property type="term" value="C:SAGA complex"/>
    <property type="evidence" value="ECO:0000318"/>
    <property type="project" value="GO_Central"/>
</dbReference>
<dbReference type="GO" id="GO:0005524">
    <property type="term" value="F:ATP binding"/>
    <property type="evidence" value="ECO:0000250"/>
    <property type="project" value="dictyBase"/>
</dbReference>
<dbReference type="GO" id="GO:0004402">
    <property type="term" value="F:histone acetyltransferase activity"/>
    <property type="evidence" value="ECO:0000250"/>
    <property type="project" value="dictyBase"/>
</dbReference>
<dbReference type="GO" id="GO:0004672">
    <property type="term" value="F:protein kinase activity"/>
    <property type="evidence" value="ECO:0000250"/>
    <property type="project" value="dictyBase"/>
</dbReference>
<dbReference type="GO" id="GO:0003712">
    <property type="term" value="F:transcription coregulator activity"/>
    <property type="evidence" value="ECO:0000250"/>
    <property type="project" value="dictyBase"/>
</dbReference>
<dbReference type="GO" id="GO:0140861">
    <property type="term" value="P:DNA repair-dependent chromatin remodeling"/>
    <property type="evidence" value="ECO:0000318"/>
    <property type="project" value="GO_Central"/>
</dbReference>
<dbReference type="GO" id="GO:0006355">
    <property type="term" value="P:regulation of DNA-templated transcription"/>
    <property type="evidence" value="ECO:0000318"/>
    <property type="project" value="GO_Central"/>
</dbReference>
<dbReference type="InterPro" id="IPR016024">
    <property type="entry name" value="ARM-type_fold"/>
</dbReference>
<dbReference type="InterPro" id="IPR050517">
    <property type="entry name" value="DDR_Repair_Kinase"/>
</dbReference>
<dbReference type="InterPro" id="IPR011009">
    <property type="entry name" value="Kinase-like_dom_sf"/>
</dbReference>
<dbReference type="InterPro" id="IPR000403">
    <property type="entry name" value="PI3/4_kinase_cat_dom"/>
</dbReference>
<dbReference type="InterPro" id="IPR003151">
    <property type="entry name" value="PIK-rel_kinase_FAT"/>
</dbReference>
<dbReference type="InterPro" id="IPR014009">
    <property type="entry name" value="PIK_FAT"/>
</dbReference>
<dbReference type="InterPro" id="IPR046807">
    <property type="entry name" value="Tra1_central"/>
</dbReference>
<dbReference type="InterPro" id="IPR046805">
    <property type="entry name" value="Tra1_ring"/>
</dbReference>
<dbReference type="PANTHER" id="PTHR11139">
    <property type="entry name" value="ATAXIA TELANGIECTASIA MUTATED ATM -RELATED"/>
    <property type="match status" value="1"/>
</dbReference>
<dbReference type="PANTHER" id="PTHR11139:SF1">
    <property type="entry name" value="TRANSFORMATION_TRANSCRIPTION DOMAIN-ASSOCIATED PROTEIN"/>
    <property type="match status" value="1"/>
</dbReference>
<dbReference type="Pfam" id="PF02259">
    <property type="entry name" value="FAT"/>
    <property type="match status" value="1"/>
</dbReference>
<dbReference type="Pfam" id="PF20175">
    <property type="entry name" value="Tra1_central"/>
    <property type="match status" value="1"/>
</dbReference>
<dbReference type="Pfam" id="PF20206">
    <property type="entry name" value="Tra1_ring"/>
    <property type="match status" value="2"/>
</dbReference>
<dbReference type="SUPFAM" id="SSF48371">
    <property type="entry name" value="ARM repeat"/>
    <property type="match status" value="3"/>
</dbReference>
<dbReference type="SUPFAM" id="SSF81995">
    <property type="entry name" value="beta-sandwich domain of Sec23/24"/>
    <property type="match status" value="1"/>
</dbReference>
<dbReference type="SUPFAM" id="SSF56112">
    <property type="entry name" value="Protein kinase-like (PK-like)"/>
    <property type="match status" value="1"/>
</dbReference>
<dbReference type="PROSITE" id="PS51189">
    <property type="entry name" value="FAT"/>
    <property type="match status" value="1"/>
</dbReference>
<dbReference type="PROSITE" id="PS51190">
    <property type="entry name" value="FATC"/>
    <property type="match status" value="1"/>
</dbReference>
<dbReference type="PROSITE" id="PS50290">
    <property type="entry name" value="PI3_4_KINASE_3"/>
    <property type="match status" value="1"/>
</dbReference>
<accession>Q54T85</accession>
<comment type="similarity">
    <text evidence="6">Belongs to the PI3/PI4-kinase family. TRA1 subfamily.</text>
</comment>
<organism>
    <name type="scientific">Dictyostelium discoideum</name>
    <name type="common">Social amoeba</name>
    <dbReference type="NCBI Taxonomy" id="44689"/>
    <lineage>
        <taxon>Eukaryota</taxon>
        <taxon>Amoebozoa</taxon>
        <taxon>Evosea</taxon>
        <taxon>Eumycetozoa</taxon>
        <taxon>Dictyostelia</taxon>
        <taxon>Dictyosteliales</taxon>
        <taxon>Dictyosteliaceae</taxon>
        <taxon>Dictyostelium</taxon>
    </lineage>
</organism>
<protein>
    <recommendedName>
        <fullName>Probable transcription-associated protein 1</fullName>
    </recommendedName>
</protein>
<reference key="1">
    <citation type="journal article" date="2005" name="Nature">
        <title>The genome of the social amoeba Dictyostelium discoideum.</title>
        <authorList>
            <person name="Eichinger L."/>
            <person name="Pachebat J.A."/>
            <person name="Gloeckner G."/>
            <person name="Rajandream M.A."/>
            <person name="Sucgang R."/>
            <person name="Berriman M."/>
            <person name="Song J."/>
            <person name="Olsen R."/>
            <person name="Szafranski K."/>
            <person name="Xu Q."/>
            <person name="Tunggal B."/>
            <person name="Kummerfeld S."/>
            <person name="Madera M."/>
            <person name="Konfortov B.A."/>
            <person name="Rivero F."/>
            <person name="Bankier A.T."/>
            <person name="Lehmann R."/>
            <person name="Hamlin N."/>
            <person name="Davies R."/>
            <person name="Gaudet P."/>
            <person name="Fey P."/>
            <person name="Pilcher K."/>
            <person name="Chen G."/>
            <person name="Saunders D."/>
            <person name="Sodergren E.J."/>
            <person name="Davis P."/>
            <person name="Kerhornou A."/>
            <person name="Nie X."/>
            <person name="Hall N."/>
            <person name="Anjard C."/>
            <person name="Hemphill L."/>
            <person name="Bason N."/>
            <person name="Farbrother P."/>
            <person name="Desany B."/>
            <person name="Just E."/>
            <person name="Morio T."/>
            <person name="Rost R."/>
            <person name="Churcher C.M."/>
            <person name="Cooper J."/>
            <person name="Haydock S."/>
            <person name="van Driessche N."/>
            <person name="Cronin A."/>
            <person name="Goodhead I."/>
            <person name="Muzny D.M."/>
            <person name="Mourier T."/>
            <person name="Pain A."/>
            <person name="Lu M."/>
            <person name="Harper D."/>
            <person name="Lindsay R."/>
            <person name="Hauser H."/>
            <person name="James K.D."/>
            <person name="Quiles M."/>
            <person name="Madan Babu M."/>
            <person name="Saito T."/>
            <person name="Buchrieser C."/>
            <person name="Wardroper A."/>
            <person name="Felder M."/>
            <person name="Thangavelu M."/>
            <person name="Johnson D."/>
            <person name="Knights A."/>
            <person name="Loulseged H."/>
            <person name="Mungall K.L."/>
            <person name="Oliver K."/>
            <person name="Price C."/>
            <person name="Quail M.A."/>
            <person name="Urushihara H."/>
            <person name="Hernandez J."/>
            <person name="Rabbinowitsch E."/>
            <person name="Steffen D."/>
            <person name="Sanders M."/>
            <person name="Ma J."/>
            <person name="Kohara Y."/>
            <person name="Sharp S."/>
            <person name="Simmonds M.N."/>
            <person name="Spiegler S."/>
            <person name="Tivey A."/>
            <person name="Sugano S."/>
            <person name="White B."/>
            <person name="Walker D."/>
            <person name="Woodward J.R."/>
            <person name="Winckler T."/>
            <person name="Tanaka Y."/>
            <person name="Shaulsky G."/>
            <person name="Schleicher M."/>
            <person name="Weinstock G.M."/>
            <person name="Rosenthal A."/>
            <person name="Cox E.C."/>
            <person name="Chisholm R.L."/>
            <person name="Gibbs R.A."/>
            <person name="Loomis W.F."/>
            <person name="Platzer M."/>
            <person name="Kay R.R."/>
            <person name="Williams J.G."/>
            <person name="Dear P.H."/>
            <person name="Noegel A.A."/>
            <person name="Barrell B.G."/>
            <person name="Kuspa A."/>
        </authorList>
    </citation>
    <scope>NUCLEOTIDE SEQUENCE [LARGE SCALE GENOMIC DNA]</scope>
    <source>
        <strain>AX4</strain>
    </source>
</reference>
<reference key="2">
    <citation type="journal article" date="2006" name="PLoS Genet.">
        <title>The dictyostelium kinome -- analysis of the protein kinases from a simple model organism.</title>
        <authorList>
            <person name="Goldberg J.M."/>
            <person name="Manning G."/>
            <person name="Liu A."/>
            <person name="Fey P."/>
            <person name="Pilcher K.E."/>
            <person name="Xu Y."/>
            <person name="Smith J.L."/>
        </authorList>
    </citation>
    <scope>GENE FAMILY</scope>
    <scope>NOMENCLATURE</scope>
</reference>
<sequence>MSTNPPQPPPSSTIASNPPQPIATPMSTTNPSQPTITSSSAASSSSSSSSGNPVNFESYARRCFELNNNNEQTQLLALVTEIRDNIELVHTVEYPTFLNFLFPVFYNILRQGAVQFNDGPEQKIRNTILDILNKLPNNELLRPHILVLLQLSMYLLEVDNEENALVCLRIIIELHKNYRNALESEIQPFLNIVLKLYTDLPSTIEKTFSSSSSASLSTTTTAISPTTTTTTTPATATTPATTTATGNTITTPPPATPPSTTATAISPTSSTTTTTTATTAAAATIATTTATTTITPPLPPYMIKSIESFKILTECPIVVILLFQLYNSYMSSNVPKFIPLIIETLSLQAPANSTVTHHSQYVDFIAAQVKTLYLLAYVLKWHIEQIKQYSDRFPRSVIQLLQNCPAHSSAIRKELLVTLRHILSSDFKSKFIVYLDLLLDEKIILGTSRTSYESLRSMAYGSLADFIHNMRNELNINQISKVVAIYSRHLHDQTNPVSIQIMSVKLIISLMDVIQRKQDPPEYKSRSIIYKVIESFINKFSSLKRSIPKLLADQQKEKEKELKDPQSLKDKLDGLSSANTTTSSTGEIIILDPVKDTRTLIKTMTSSLRNIFWSLSACPINKPGTGITTGAGATTTTTTNTNNTIIPPVRIALPSIEESLLFIKLFKSTVKCFPIYGGCNPSPQEEKEMIENFTASFMMLDQRTFQEVSTFILPFLYQRSLNNPSLLLIPQGFLSVTQMNPTGVQINRVFLEVLTPFLYEKIRNLQPTDKPDICMIKLIKLIFNAIQPNNNSGVGGSGGSNSSGGGGGGGSNSSNNSTNSNTTTNIDSTCVQQVLSSMILILLKLITESKQIDSIQYLLLLKTIFKSCTRPDQSKEITLLFPIILETLNDLLLSSSHSTMIPAVQQLLIELSLSIPVQIATLLPSLHLLVKPLMLALDSSSSELLSTTFRILELIVDNATGDFLLFTFRDNKSEFLQILSKHLRPAPYFYGPHAIRILGKMAGKSRSFSVLSPILSIDSTSNSRSIPSSNKNNNNNNYYYNGSCSNSENYSKVFKLLLPCETGDDKTKSIPLDKSIQSIKNILLYQLDDSYLQSNAYSLLKYYISLYLSSQDFLINQQSLLNELLNNLKQSNNNNNNNSSTVNLNIIELDNENENENDNNNNNNNNNNNNNNNNNNNNNNNNNNNNNNNNNNNNIKTFKTKEEYLNEIKNFKDLVYCLFLSITNDHLKEKFDSLKFLNNFIYHFVLYLSTFKFNYSIISMKELDPKIFLEALVDVMSMSSHNIINQSNIEDLQTISTSKFNKAHITSLLDMIFNCSNQIFSENSNSKKNNELMTSSTDVKDGEKVEMETEDSLKKDEMSAAATSEIKKETNVVVENEQDKDTVLISPIFKYLVKLFIKCCYDKDFSVKGAGLIGIEYIIENVKLSWIQPFQHLILKSLLFVCEDLSYSGYQPTIDYASEIIINLIKLCVPNLNIVPDSMEIDQSTTTASTTETAATTTTTETATPMVTESTAIVTEPTATTPTATPTSTPTSTSTPTPTPIPTATTSSTTTAPTTTTTTTTNLSSSSTINQKPHCKLNQLKLKDRELLKLILEILMERITSWSGHTRSLAQRMLTMISVEITKIPMSQLIEDLKMTVQKLLPKTPLKSLSISLQTGVIDGLTFCLSQKPSPLIEIGADTVRVLQECLNVAGDESSPTQQSQIKSSSAKSISATNNLRVCGVEMVATAMTCPDFLQFECLEFKNRIIRMFFKVVTARNKEMAMAAKRGLANSIQQQRLHRDLLQTCLRPVLSNITDPKSLSVPFLQGLSRLLELLSNCFNAALGEKLFEYLKKFEEAGKLSYLANKYRDSEEVKICASIIDIFHLLPPAAKLLDSTIILTIRLEQSLCKEVTSPYREPLIRFLAKYPQRTIEIFMGQLPQFNLIFRLILKHQPLSKPIVEELANTYSIWLEAHLKSPSADIRFHTLSMVSIIRKQLPNWLPENRKVLDILIEYWRPLSHMIQSASNPLDISNQTLRETKIIVKCFLQYCKAHSEETDLYFYMLSVLTLRASMDFNFLRDYYQHDLAPSSTIEQKKKIIQTFLIFFKDQTIPSDNKVQAIQNLITPILTNYFHQTDRNSSSGGGIIEDSLFIQLTKQTLETEVKASYDDTLLIELLQLETLLVKNLSSVLVDCRKELIKFAWNHLKNEDLTCKQSAYILACGFIEAYETPHKIVLQVYVPLLRAYQPESKHLVKQALDILMPCFKTRLPGGDPKNSTWVKWTKKIIVEEGHTTAQLVHIIQLIVRHPQLFYPSRSQFVPHIILLLPKIALGSNLTAENKKLSIDIADTIIIWEKMRMSNLQQSIKTSSSSLPTTTTTTTSSNKPTDSSSLPPNTPIAEGSITTPSQGGVATPNVSDSTPTPGIHHGATNIDDEYRPPLSAIEHISLFLIRMASNWYHINEKCSELLRQTLVIWPETNIKFSVFEKPMNTDQPQMISTCLSMLNLIAEYQVNTFIPNNVVALQQSLLQALNSDNAKISSLLGSLFKKILAAFPLPTNNTTTTTPVSSTTTTEQSSDSSSLPPPPPVQVTKPIPNEMVSFYTFIGTQFEMILGAFDKNYNLSILSNIKVFSDHSESFIDPYISLIVKVLIRLTRNYLSQDSDGGTGSLANKPLSSSGSTSQTGGASQTATSASNVVLKKSNSEIISGLCKTYGFLKTKTTKLNSDQRNAFIQSLLVLIERSNDVELLSEIIKVVDYLISISPSPSPSTTPVVTETTIPSTTTTTTTAATTTTTTTPSTTTTAATTTTAPTTTETTTTAATTTITPFLTIKEKINFLIKLGRVDQLSNAELSLSYYKLVLSFYSESNSSSKQELSQLEPCFMMGLRNTVDQGMRKSLFNILHKSIGTTPYQRLNYIIGVQQWDILGTTYWIKHALDLLLAILPNDKFVKISNFCSKLPTSLKFANRNGNDINQQQQQQQQQQQQQQQQQQQQQQQQQQQQQQQQQQQQQQHHQQEQPMEIDENLVVEQSSSVNKGNEEFKKSLKLHTQWLESLKNEESLKFSEFNENLRELIFIDSHLVNDLWCHLFSDMWSDLTKEEQFKLSKSLTLLLSKDYTKKVPLVSKPIIPPTSIPISKPIITTTTSTSSSTSTTTPITTIPLINNSQLITIVTLTQQQTNPIIVPSLREPNVIKTWMETLGMCKPIPKVPIEVISFLGENYNCWYYAIRMIEQQLIDRQKLLDSTDINWDYLSYLYGAIGEKDLLYGIYRKRYQCDETKLGLLLEQFYMFQSSQEVFLSAMNKYSAVGCKPTPRSENLLWEDHWLECAKRLNQWNFVHEFSKEKNMYDLTIESAWKIPQWNSVKENMKKMMSQGDTSIRKILQGYFLTNEKRYHEVDPAIVTSNQLILDKWVSLPERSFRSHTNSLVEMQQVVELQESVHILKEISNITLSQQPADLSRSFLTSNYIKSIFNIWRERLPNKDEDLLIWFELMAWRQQVFNIIGTPSMNGGIGANPVTPTNTTTTITNPDGTTTTTTTPLPPPQQPINQIEFASPRYMVLEMAWTMNKYSHIVRKHNIIEVCLNSLSKMFDLQIELHDIFLNLKEQIKCYLQLPTHYDTGISIINSTNLDFFTPMQKGEFLQLKGEFLNRLGRYDEANQSFASSVSQYENSAKNWISWAHFCDNQFTNHSSSSITPSSTPTTYDIKTQWAESAISCYIQGIKCDPKYGSRYVPRIFWLLYLNGSGEVPQQIQTQQQQQQAAAQGGLPPQPRKLTPAQSVFQSFLNSWTILPQWIWLNYMPQLISGAANLLNFPGYGFLCWQMIGKICYLFPNSSYYHFRKLVLEMKSNASKFTTSPPTTTTTATTTTTATTTITTATTTSTPTQTTPTQNTTTPIKEESSTTTATTTPAVPSTSTPTSTSAPAPISTSTNTPPNATTTTPQANTTSPPPPSSTFSPLKMTETLSLGLHQYHSCLINEIDMMLGSFSILSGSIPAVYQFNGSLNQILLEAFKLNKIEDSIYNSIRSLYKHYFVNEIKYQNSKEFLEAYKSEFKVDFIEFNLDDIVSDTIKKESDQETNVVEGTTNVSKELETTSEKQQQQQQQLPTISILLLIEKLIKWIDRKPDNSLITVVNTDQSTNYYGIDTMICLESICPQLVNFKPSILEIPGQYNTNRDPNIENNVKVEKVGMFAKLIKHSNGMVCPRITLYGGNGKAYQFLIESSPSLINGITNSNNNNVARVYERKNQLLGSINSMLIKNRETRRRGLTLNSYPTVVPIKNSLTMIQNIGNDSIKQLAEVWYTHSNQSNLFKPMLKYKEMLLNSNLHTELLSKKDQDGDLEFTNITEDNNISSSSSSSSSSGSNSGENSPIIDSSKLVVFREMSKEIGDELMINYIQSTLLPTNYQDQYEFKLNFSNQFGLHSLLQYILFSDIGDIDPSKIYLTKSTGSVYYNDWSLKLTNRKLGFDLLQDNPYNQQQLLRLSPNIRNYLGPLYLEGSYLSSMISTCICLSDLKDQLVNSINLFIFDEYMCMNNVEPLQQSEQNKDRNIHYEFIDKTTATVHQMLENRIDSLTPSSQPDKTCFISPIVKKVNQLIQNSLSSNISQLDQLSCPWL</sequence>
<keyword id="KW-0175">Coiled coil</keyword>
<keyword id="KW-1185">Reference proteome</keyword>